<protein>
    <recommendedName>
        <fullName evidence="1">ATP synthase subunit delta</fullName>
    </recommendedName>
    <alternativeName>
        <fullName evidence="1">ATP synthase F(1) sector subunit delta</fullName>
    </alternativeName>
    <alternativeName>
        <fullName evidence="1">F-type ATPase subunit delta</fullName>
        <shortName evidence="1">F-ATPase subunit delta</shortName>
    </alternativeName>
</protein>
<accession>B0VNK1</accession>
<comment type="function">
    <text evidence="1">F(1)F(0) ATP synthase produces ATP from ADP in the presence of a proton or sodium gradient. F-type ATPases consist of two structural domains, F(1) containing the extramembraneous catalytic core and F(0) containing the membrane proton channel, linked together by a central stalk and a peripheral stalk. During catalysis, ATP synthesis in the catalytic domain of F(1) is coupled via a rotary mechanism of the central stalk subunits to proton translocation.</text>
</comment>
<comment type="function">
    <text evidence="1">This protein is part of the stalk that links CF(0) to CF(1). It either transmits conformational changes from CF(0) to CF(1) or is implicated in proton conduction.</text>
</comment>
<comment type="subunit">
    <text evidence="1">F-type ATPases have 2 components, F(1) - the catalytic core - and F(0) - the membrane proton channel. F(1) has five subunits: alpha(3), beta(3), gamma(1), delta(1), epsilon(1). F(0) has three main subunits: a(1), b(2) and c(10-14). The alpha and beta chains form an alternating ring which encloses part of the gamma chain. F(1) is attached to F(0) by a central stalk formed by the gamma and epsilon chains, while a peripheral stalk is formed by the delta and b chains.</text>
</comment>
<comment type="subcellular location">
    <subcellularLocation>
        <location evidence="1">Cell inner membrane</location>
        <topology evidence="1">Peripheral membrane protein</topology>
    </subcellularLocation>
</comment>
<comment type="similarity">
    <text evidence="1">Belongs to the ATPase delta chain family.</text>
</comment>
<proteinExistence type="inferred from homology"/>
<evidence type="ECO:0000255" key="1">
    <source>
        <dbReference type="HAMAP-Rule" id="MF_01416"/>
    </source>
</evidence>
<dbReference type="EMBL" id="CU468230">
    <property type="protein sequence ID" value="CAO99571.1"/>
    <property type="molecule type" value="Genomic_DNA"/>
</dbReference>
<dbReference type="SMR" id="B0VNK1"/>
<dbReference type="KEGG" id="abm:ABSDF0167"/>
<dbReference type="HOGENOM" id="CLU_085114_3_0_6"/>
<dbReference type="Proteomes" id="UP000001741">
    <property type="component" value="Chromosome"/>
</dbReference>
<dbReference type="GO" id="GO:0005886">
    <property type="term" value="C:plasma membrane"/>
    <property type="evidence" value="ECO:0007669"/>
    <property type="project" value="UniProtKB-SubCell"/>
</dbReference>
<dbReference type="GO" id="GO:0045259">
    <property type="term" value="C:proton-transporting ATP synthase complex"/>
    <property type="evidence" value="ECO:0007669"/>
    <property type="project" value="UniProtKB-KW"/>
</dbReference>
<dbReference type="GO" id="GO:0046933">
    <property type="term" value="F:proton-transporting ATP synthase activity, rotational mechanism"/>
    <property type="evidence" value="ECO:0007669"/>
    <property type="project" value="UniProtKB-UniRule"/>
</dbReference>
<dbReference type="Gene3D" id="1.10.520.20">
    <property type="entry name" value="N-terminal domain of the delta subunit of the F1F0-ATP synthase"/>
    <property type="match status" value="1"/>
</dbReference>
<dbReference type="HAMAP" id="MF_01416">
    <property type="entry name" value="ATP_synth_delta_bact"/>
    <property type="match status" value="1"/>
</dbReference>
<dbReference type="InterPro" id="IPR026015">
    <property type="entry name" value="ATP_synth_OSCP/delta_N_sf"/>
</dbReference>
<dbReference type="InterPro" id="IPR020781">
    <property type="entry name" value="ATPase_OSCP/d_CS"/>
</dbReference>
<dbReference type="InterPro" id="IPR000711">
    <property type="entry name" value="ATPase_OSCP/dsu"/>
</dbReference>
<dbReference type="NCBIfam" id="TIGR01145">
    <property type="entry name" value="ATP_synt_delta"/>
    <property type="match status" value="1"/>
</dbReference>
<dbReference type="NCBIfam" id="NF004402">
    <property type="entry name" value="PRK05758.2-2"/>
    <property type="match status" value="1"/>
</dbReference>
<dbReference type="PANTHER" id="PTHR11910">
    <property type="entry name" value="ATP SYNTHASE DELTA CHAIN"/>
    <property type="match status" value="1"/>
</dbReference>
<dbReference type="Pfam" id="PF00213">
    <property type="entry name" value="OSCP"/>
    <property type="match status" value="1"/>
</dbReference>
<dbReference type="PRINTS" id="PR00125">
    <property type="entry name" value="ATPASEDELTA"/>
</dbReference>
<dbReference type="SUPFAM" id="SSF47928">
    <property type="entry name" value="N-terminal domain of the delta subunit of the F1F0-ATP synthase"/>
    <property type="match status" value="1"/>
</dbReference>
<dbReference type="PROSITE" id="PS00389">
    <property type="entry name" value="ATPASE_DELTA"/>
    <property type="match status" value="1"/>
</dbReference>
<sequence>MAELLTLARPYAKAAFAYASEQGATDNWSNALQVLSAAVQDEAFSAYLNRPEHTPAEQVKLFAKVLGEDQSQAVSNFLTLLADNDRLVLLPEIAAEYEQLKSQNNNNVDVVIESAFPLTAEQEQLLKSALEKRFNSTVTVSVEVKPELIAGVVIRAGDQVIDDSALNKLEKMRTRLLA</sequence>
<feature type="chain" id="PRO_0000370869" description="ATP synthase subunit delta">
    <location>
        <begin position="1"/>
        <end position="178"/>
    </location>
</feature>
<name>ATPD_ACIBS</name>
<keyword id="KW-0066">ATP synthesis</keyword>
<keyword id="KW-0997">Cell inner membrane</keyword>
<keyword id="KW-1003">Cell membrane</keyword>
<keyword id="KW-0139">CF(1)</keyword>
<keyword id="KW-0375">Hydrogen ion transport</keyword>
<keyword id="KW-0406">Ion transport</keyword>
<keyword id="KW-0472">Membrane</keyword>
<keyword id="KW-0813">Transport</keyword>
<reference key="1">
    <citation type="journal article" date="2008" name="PLoS ONE">
        <title>Comparative analysis of Acinetobacters: three genomes for three lifestyles.</title>
        <authorList>
            <person name="Vallenet D."/>
            <person name="Nordmann P."/>
            <person name="Barbe V."/>
            <person name="Poirel L."/>
            <person name="Mangenot S."/>
            <person name="Bataille E."/>
            <person name="Dossat C."/>
            <person name="Gas S."/>
            <person name="Kreimeyer A."/>
            <person name="Lenoble P."/>
            <person name="Oztas S."/>
            <person name="Poulain J."/>
            <person name="Segurens B."/>
            <person name="Robert C."/>
            <person name="Abergel C."/>
            <person name="Claverie J.-M."/>
            <person name="Raoult D."/>
            <person name="Medigue C."/>
            <person name="Weissenbach J."/>
            <person name="Cruveiller S."/>
        </authorList>
    </citation>
    <scope>NUCLEOTIDE SEQUENCE [LARGE SCALE GENOMIC DNA]</scope>
    <source>
        <strain>SDF</strain>
    </source>
</reference>
<organism>
    <name type="scientific">Acinetobacter baumannii (strain SDF)</name>
    <dbReference type="NCBI Taxonomy" id="509170"/>
    <lineage>
        <taxon>Bacteria</taxon>
        <taxon>Pseudomonadati</taxon>
        <taxon>Pseudomonadota</taxon>
        <taxon>Gammaproteobacteria</taxon>
        <taxon>Moraxellales</taxon>
        <taxon>Moraxellaceae</taxon>
        <taxon>Acinetobacter</taxon>
        <taxon>Acinetobacter calcoaceticus/baumannii complex</taxon>
    </lineage>
</organism>
<gene>
    <name evidence="1" type="primary">atpH</name>
    <name type="ordered locus">ABSDF0167</name>
</gene>